<keyword id="KW-0067">ATP-binding</keyword>
<keyword id="KW-0547">Nucleotide-binding</keyword>
<keyword id="KW-1185">Reference proteome</keyword>
<keyword id="KW-0902">Two-component regulatory system</keyword>
<comment type="function">
    <text evidence="3">May play a role in cold adaptation.</text>
</comment>
<comment type="induction">
    <text evidence="2">8-fold induction by growth at 15 degrees Celsius.</text>
</comment>
<comment type="disruption phenotype">
    <text evidence="2">Cells grow much more slowly at 15 degrees Celsius.</text>
</comment>
<gene>
    <name type="primary">yplP</name>
    <name type="ordered locus">BSU21780</name>
</gene>
<proteinExistence type="evidence at transcript level"/>
<protein>
    <recommendedName>
        <fullName>Putative sigma L-dependent transcriptional regulator YplP</fullName>
    </recommendedName>
</protein>
<accession>P54156</accession>
<evidence type="ECO:0000255" key="1">
    <source>
        <dbReference type="PROSITE-ProRule" id="PRU00193"/>
    </source>
</evidence>
<evidence type="ECO:0000269" key="2">
    <source>
    </source>
</evidence>
<evidence type="ECO:0000305" key="3">
    <source>
    </source>
</evidence>
<organism>
    <name type="scientific">Bacillus subtilis (strain 168)</name>
    <dbReference type="NCBI Taxonomy" id="224308"/>
    <lineage>
        <taxon>Bacteria</taxon>
        <taxon>Bacillati</taxon>
        <taxon>Bacillota</taxon>
        <taxon>Bacilli</taxon>
        <taxon>Bacillales</taxon>
        <taxon>Bacillaceae</taxon>
        <taxon>Bacillus</taxon>
    </lineage>
</organism>
<dbReference type="EMBL" id="L77246">
    <property type="protein sequence ID" value="AAA96638.1"/>
    <property type="molecule type" value="Genomic_DNA"/>
</dbReference>
<dbReference type="EMBL" id="AL009126">
    <property type="protein sequence ID" value="CAB14096.1"/>
    <property type="molecule type" value="Genomic_DNA"/>
</dbReference>
<dbReference type="PIR" id="C69938">
    <property type="entry name" value="C69938"/>
</dbReference>
<dbReference type="RefSeq" id="WP_004399025.1">
    <property type="nucleotide sequence ID" value="NZ_OZ025638.1"/>
</dbReference>
<dbReference type="SMR" id="P54156"/>
<dbReference type="FunCoup" id="P54156">
    <property type="interactions" value="3"/>
</dbReference>
<dbReference type="STRING" id="224308.BSU21780"/>
<dbReference type="PaxDb" id="224308-BSU21780"/>
<dbReference type="EnsemblBacteria" id="CAB14096">
    <property type="protein sequence ID" value="CAB14096"/>
    <property type="gene ID" value="BSU_21780"/>
</dbReference>
<dbReference type="GeneID" id="939094"/>
<dbReference type="KEGG" id="bsu:BSU21780"/>
<dbReference type="PATRIC" id="fig|224308.179.peg.2380"/>
<dbReference type="eggNOG" id="COG1221">
    <property type="taxonomic scope" value="Bacteria"/>
</dbReference>
<dbReference type="InParanoid" id="P54156"/>
<dbReference type="OrthoDB" id="9803970at2"/>
<dbReference type="PhylomeDB" id="P54156"/>
<dbReference type="BioCyc" id="BSUB:BSU21780-MONOMER"/>
<dbReference type="Proteomes" id="UP000001570">
    <property type="component" value="Chromosome"/>
</dbReference>
<dbReference type="GO" id="GO:0032993">
    <property type="term" value="C:protein-DNA complex"/>
    <property type="evidence" value="ECO:0000318"/>
    <property type="project" value="GO_Central"/>
</dbReference>
<dbReference type="GO" id="GO:0005524">
    <property type="term" value="F:ATP binding"/>
    <property type="evidence" value="ECO:0007669"/>
    <property type="project" value="UniProtKB-KW"/>
</dbReference>
<dbReference type="GO" id="GO:0016887">
    <property type="term" value="F:ATP hydrolysis activity"/>
    <property type="evidence" value="ECO:0007669"/>
    <property type="project" value="InterPro"/>
</dbReference>
<dbReference type="GO" id="GO:0000987">
    <property type="term" value="F:cis-regulatory region sequence-specific DNA binding"/>
    <property type="evidence" value="ECO:0000318"/>
    <property type="project" value="GO_Central"/>
</dbReference>
<dbReference type="GO" id="GO:0001216">
    <property type="term" value="F:DNA-binding transcription activator activity"/>
    <property type="evidence" value="ECO:0000318"/>
    <property type="project" value="GO_Central"/>
</dbReference>
<dbReference type="GO" id="GO:0000160">
    <property type="term" value="P:phosphorelay signal transduction system"/>
    <property type="evidence" value="ECO:0007669"/>
    <property type="project" value="UniProtKB-KW"/>
</dbReference>
<dbReference type="GO" id="GO:0045893">
    <property type="term" value="P:positive regulation of DNA-templated transcription"/>
    <property type="evidence" value="ECO:0000318"/>
    <property type="project" value="GO_Central"/>
</dbReference>
<dbReference type="CDD" id="cd00009">
    <property type="entry name" value="AAA"/>
    <property type="match status" value="1"/>
</dbReference>
<dbReference type="Gene3D" id="1.10.8.60">
    <property type="match status" value="1"/>
</dbReference>
<dbReference type="Gene3D" id="3.40.50.300">
    <property type="entry name" value="P-loop containing nucleotide triphosphate hydrolases"/>
    <property type="match status" value="1"/>
</dbReference>
<dbReference type="Gene3D" id="1.10.10.10">
    <property type="entry name" value="Winged helix-like DNA-binding domain superfamily/Winged helix DNA-binding domain"/>
    <property type="match status" value="1"/>
</dbReference>
<dbReference type="InterPro" id="IPR003593">
    <property type="entry name" value="AAA+_ATPase"/>
</dbReference>
<dbReference type="InterPro" id="IPR027417">
    <property type="entry name" value="P-loop_NTPase"/>
</dbReference>
<dbReference type="InterPro" id="IPR013668">
    <property type="entry name" value="RNase_R_HTH_12"/>
</dbReference>
<dbReference type="InterPro" id="IPR002078">
    <property type="entry name" value="Sigma_54_int"/>
</dbReference>
<dbReference type="InterPro" id="IPR036388">
    <property type="entry name" value="WH-like_DNA-bd_sf"/>
</dbReference>
<dbReference type="PANTHER" id="PTHR32071:SF119">
    <property type="entry name" value="SIGMA L-DEPENDENT TRANSCRIPTIONAL REGULATOR YPLP-RELATED"/>
    <property type="match status" value="1"/>
</dbReference>
<dbReference type="PANTHER" id="PTHR32071">
    <property type="entry name" value="TRANSCRIPTIONAL REGULATORY PROTEIN"/>
    <property type="match status" value="1"/>
</dbReference>
<dbReference type="Pfam" id="PF08461">
    <property type="entry name" value="HTH_12"/>
    <property type="match status" value="1"/>
</dbReference>
<dbReference type="Pfam" id="PF00158">
    <property type="entry name" value="Sigma54_activat"/>
    <property type="match status" value="1"/>
</dbReference>
<dbReference type="SMART" id="SM00382">
    <property type="entry name" value="AAA"/>
    <property type="match status" value="1"/>
</dbReference>
<dbReference type="SUPFAM" id="SSF52540">
    <property type="entry name" value="P-loop containing nucleoside triphosphate hydrolases"/>
    <property type="match status" value="1"/>
</dbReference>
<dbReference type="PROSITE" id="PS50045">
    <property type="entry name" value="SIGMA54_INTERACT_4"/>
    <property type="match status" value="1"/>
</dbReference>
<name>YPLP_BACSU</name>
<reference key="1">
    <citation type="journal article" date="1996" name="Microbiology">
        <title>Organization of the Bacillus subtilis 168 chromosome between kdg and the attachment site of the SP beta prophage: use of long accurate PCR and yeast artificial chromosomes for sequencing.</title>
        <authorList>
            <person name="Capuano V."/>
            <person name="Galleron N."/>
            <person name="Pujic P."/>
            <person name="Sorokin A."/>
            <person name="Ehrlich S.D."/>
        </authorList>
    </citation>
    <scope>NUCLEOTIDE SEQUENCE [GENOMIC DNA]</scope>
    <source>
        <strain>168 / Marburg / ATCC 6051 / DSM 10 / JCM 1465 / NBRC 13719 / NCIMB 3610 / NRRL NRS-744 / VKM B-501</strain>
    </source>
</reference>
<reference key="2">
    <citation type="journal article" date="1997" name="Nature">
        <title>The complete genome sequence of the Gram-positive bacterium Bacillus subtilis.</title>
        <authorList>
            <person name="Kunst F."/>
            <person name="Ogasawara N."/>
            <person name="Moszer I."/>
            <person name="Albertini A.M."/>
            <person name="Alloni G."/>
            <person name="Azevedo V."/>
            <person name="Bertero M.G."/>
            <person name="Bessieres P."/>
            <person name="Bolotin A."/>
            <person name="Borchert S."/>
            <person name="Borriss R."/>
            <person name="Boursier L."/>
            <person name="Brans A."/>
            <person name="Braun M."/>
            <person name="Brignell S.C."/>
            <person name="Bron S."/>
            <person name="Brouillet S."/>
            <person name="Bruschi C.V."/>
            <person name="Caldwell B."/>
            <person name="Capuano V."/>
            <person name="Carter N.M."/>
            <person name="Choi S.-K."/>
            <person name="Codani J.-J."/>
            <person name="Connerton I.F."/>
            <person name="Cummings N.J."/>
            <person name="Daniel R.A."/>
            <person name="Denizot F."/>
            <person name="Devine K.M."/>
            <person name="Duesterhoeft A."/>
            <person name="Ehrlich S.D."/>
            <person name="Emmerson P.T."/>
            <person name="Entian K.-D."/>
            <person name="Errington J."/>
            <person name="Fabret C."/>
            <person name="Ferrari E."/>
            <person name="Foulger D."/>
            <person name="Fritz C."/>
            <person name="Fujita M."/>
            <person name="Fujita Y."/>
            <person name="Fuma S."/>
            <person name="Galizzi A."/>
            <person name="Galleron N."/>
            <person name="Ghim S.-Y."/>
            <person name="Glaser P."/>
            <person name="Goffeau A."/>
            <person name="Golightly E.J."/>
            <person name="Grandi G."/>
            <person name="Guiseppi G."/>
            <person name="Guy B.J."/>
            <person name="Haga K."/>
            <person name="Haiech J."/>
            <person name="Harwood C.R."/>
            <person name="Henaut A."/>
            <person name="Hilbert H."/>
            <person name="Holsappel S."/>
            <person name="Hosono S."/>
            <person name="Hullo M.-F."/>
            <person name="Itaya M."/>
            <person name="Jones L.-M."/>
            <person name="Joris B."/>
            <person name="Karamata D."/>
            <person name="Kasahara Y."/>
            <person name="Klaerr-Blanchard M."/>
            <person name="Klein C."/>
            <person name="Kobayashi Y."/>
            <person name="Koetter P."/>
            <person name="Koningstein G."/>
            <person name="Krogh S."/>
            <person name="Kumano M."/>
            <person name="Kurita K."/>
            <person name="Lapidus A."/>
            <person name="Lardinois S."/>
            <person name="Lauber J."/>
            <person name="Lazarevic V."/>
            <person name="Lee S.-M."/>
            <person name="Levine A."/>
            <person name="Liu H."/>
            <person name="Masuda S."/>
            <person name="Mauel C."/>
            <person name="Medigue C."/>
            <person name="Medina N."/>
            <person name="Mellado R.P."/>
            <person name="Mizuno M."/>
            <person name="Moestl D."/>
            <person name="Nakai S."/>
            <person name="Noback M."/>
            <person name="Noone D."/>
            <person name="O'Reilly M."/>
            <person name="Ogawa K."/>
            <person name="Ogiwara A."/>
            <person name="Oudega B."/>
            <person name="Park S.-H."/>
            <person name="Parro V."/>
            <person name="Pohl T.M."/>
            <person name="Portetelle D."/>
            <person name="Porwollik S."/>
            <person name="Prescott A.M."/>
            <person name="Presecan E."/>
            <person name="Pujic P."/>
            <person name="Purnelle B."/>
            <person name="Rapoport G."/>
            <person name="Rey M."/>
            <person name="Reynolds S."/>
            <person name="Rieger M."/>
            <person name="Rivolta C."/>
            <person name="Rocha E."/>
            <person name="Roche B."/>
            <person name="Rose M."/>
            <person name="Sadaie Y."/>
            <person name="Sato T."/>
            <person name="Scanlan E."/>
            <person name="Schleich S."/>
            <person name="Schroeter R."/>
            <person name="Scoffone F."/>
            <person name="Sekiguchi J."/>
            <person name="Sekowska A."/>
            <person name="Seror S.J."/>
            <person name="Serror P."/>
            <person name="Shin B.-S."/>
            <person name="Soldo B."/>
            <person name="Sorokin A."/>
            <person name="Tacconi E."/>
            <person name="Takagi T."/>
            <person name="Takahashi H."/>
            <person name="Takemaru K."/>
            <person name="Takeuchi M."/>
            <person name="Tamakoshi A."/>
            <person name="Tanaka T."/>
            <person name="Terpstra P."/>
            <person name="Tognoni A."/>
            <person name="Tosato V."/>
            <person name="Uchiyama S."/>
            <person name="Vandenbol M."/>
            <person name="Vannier F."/>
            <person name="Vassarotti A."/>
            <person name="Viari A."/>
            <person name="Wambutt R."/>
            <person name="Wedler E."/>
            <person name="Wedler H."/>
            <person name="Weitzenegger T."/>
            <person name="Winters P."/>
            <person name="Wipat A."/>
            <person name="Yamamoto H."/>
            <person name="Yamane K."/>
            <person name="Yasumoto K."/>
            <person name="Yata K."/>
            <person name="Yoshida K."/>
            <person name="Yoshikawa H.-F."/>
            <person name="Zumstein E."/>
            <person name="Yoshikawa H."/>
            <person name="Danchin A."/>
        </authorList>
    </citation>
    <scope>NUCLEOTIDE SEQUENCE [LARGE SCALE GENOMIC DNA]</scope>
    <source>
        <strain>168</strain>
    </source>
</reference>
<reference key="3">
    <citation type="journal article" date="2002" name="J. Bacteriol.">
        <title>Genomewide transcriptional analysis of the cold shock response in Bacillus subtilis.</title>
        <authorList>
            <person name="Beckering C.L."/>
            <person name="Steil L."/>
            <person name="Weber M.H.W."/>
            <person name="Voelker U."/>
            <person name="Marahiel M.A."/>
        </authorList>
    </citation>
    <scope>FUNCTION</scope>
    <scope>INDUCTION BY COLD SHOCK</scope>
    <scope>DISRUPTION PHENOTYPE</scope>
    <source>
        <strain>168 / JH642</strain>
    </source>
</reference>
<sequence>MNSAPKLNTFQHLIGEHQTFLEAKRIAKQFSLSELPVLITGKIGTGKNHFAHAIHLESSRSNEPFISVNCSTHSEETLIHELFGPNGNTGVFQKAVRGTLFLDDVWRMPASVQAQLLKALDSDTEKPRMICASADRSVEHTFRQDLFYRLNILTLTLPELSERKSDIPLLTQHFLSNSGQQLLIDPSVFPVLEKHAFEGNVRELKNAADYMAAVSSGGTIQPYDLPPYIRGTIDGKTSKKKAKLLTLMEKAEFLFILETIKVLNEKGEPASRRIISEHSKNTQTSLTPQQVRSRLDYLEKKDYVTKSRGRAGTKITFEGLSFIETLKNQMI</sequence>
<feature type="chain" id="PRO_0000081385" description="Putative sigma L-dependent transcriptional regulator YplP">
    <location>
        <begin position="1"/>
        <end position="331"/>
    </location>
</feature>
<feature type="domain" description="Sigma-54 factor interaction" evidence="1">
    <location>
        <begin position="12"/>
        <end position="213"/>
    </location>
</feature>
<feature type="binding site" evidence="1">
    <location>
        <begin position="95"/>
        <end position="104"/>
    </location>
    <ligand>
        <name>ATP</name>
        <dbReference type="ChEBI" id="CHEBI:30616"/>
    </ligand>
</feature>